<accession>O47685</accession>
<evidence type="ECO:0000250" key="1">
    <source>
        <dbReference type="UniProtKB" id="P00415"/>
    </source>
</evidence>
<evidence type="ECO:0000250" key="2">
    <source>
        <dbReference type="UniProtKB" id="P00420"/>
    </source>
</evidence>
<evidence type="ECO:0000305" key="3"/>
<reference key="1">
    <citation type="journal article" date="1999" name="Mol. Phylogenet. Evol.">
        <title>Phylogenetic relationships in the bovid subfamily Antilopinae based on mitochondrial DNA sequences.</title>
        <authorList>
            <person name="Rebholz W.E.R."/>
            <person name="Harley E.H."/>
        </authorList>
    </citation>
    <scope>NUCLEOTIDE SEQUENCE [GENOMIC DNA]</scope>
</reference>
<geneLocation type="mitochondrion"/>
<name>COX3_TRAIM</name>
<feature type="chain" id="PRO_0000183863" description="Cytochrome c oxidase subunit 3">
    <location>
        <begin position="1"/>
        <end position="261"/>
    </location>
</feature>
<feature type="topological domain" description="Mitochondrial matrix" evidence="1">
    <location>
        <begin position="1"/>
        <end position="15"/>
    </location>
</feature>
<feature type="transmembrane region" description="Helical; Name=I" evidence="1">
    <location>
        <begin position="16"/>
        <end position="34"/>
    </location>
</feature>
<feature type="topological domain" description="Mitochondrial intermembrane" evidence="1">
    <location>
        <begin position="35"/>
        <end position="40"/>
    </location>
</feature>
<feature type="transmembrane region" description="Helical; Name=II" evidence="1">
    <location>
        <begin position="41"/>
        <end position="66"/>
    </location>
</feature>
<feature type="topological domain" description="Mitochondrial matrix" evidence="1">
    <location>
        <begin position="67"/>
        <end position="72"/>
    </location>
</feature>
<feature type="transmembrane region" description="Helical; Name=III" evidence="1">
    <location>
        <begin position="73"/>
        <end position="105"/>
    </location>
</feature>
<feature type="topological domain" description="Mitochondrial intermembrane" evidence="1">
    <location>
        <begin position="106"/>
        <end position="128"/>
    </location>
</feature>
<feature type="transmembrane region" description="Helical; Name=IV" evidence="1">
    <location>
        <begin position="129"/>
        <end position="152"/>
    </location>
</feature>
<feature type="topological domain" description="Mitochondrial matrix" evidence="1">
    <location>
        <begin position="153"/>
        <end position="155"/>
    </location>
</feature>
<feature type="transmembrane region" description="Helical; Name=V" evidence="1">
    <location>
        <begin position="156"/>
        <end position="183"/>
    </location>
</feature>
<feature type="topological domain" description="Mitochondrial intermembrane" evidence="1">
    <location>
        <begin position="184"/>
        <end position="190"/>
    </location>
</feature>
<feature type="transmembrane region" description="Helical; Name=VI" evidence="1">
    <location>
        <begin position="191"/>
        <end position="223"/>
    </location>
</feature>
<feature type="topological domain" description="Mitochondrial matrix" evidence="1">
    <location>
        <begin position="224"/>
        <end position="232"/>
    </location>
</feature>
<feature type="transmembrane region" description="Helical; Name=VII" evidence="1">
    <location>
        <begin position="233"/>
        <end position="256"/>
    </location>
</feature>
<feature type="topological domain" description="Mitochondrial intermembrane" evidence="1">
    <location>
        <begin position="257"/>
        <end position="261"/>
    </location>
</feature>
<sequence>MTHQTHAYHMVNPSPWPLTGALSALLMTSGLTMWFHYNSTILLMLGLTTNMLTMYQWWRDIIRESTFQGHHTPTVQKGLRYGMILFIISEVLFFTGFFWAFYHSSLAPTPELGGCWPPTGIHPLNPLEVPLLNTSVLLASGVSITWAHHSLMEGDRNHMLQALFITIALGIYFTLLQASEYYEAPFTISDGVYGSTFFVATGFHGLHVIIGSTFLIVCFFRQLKFHFTSSHHFGFEAAAWYWHFVDVVWLFLYVSIYWWGS</sequence>
<keyword id="KW-0472">Membrane</keyword>
<keyword id="KW-0496">Mitochondrion</keyword>
<keyword id="KW-0999">Mitochondrion inner membrane</keyword>
<keyword id="KW-1278">Translocase</keyword>
<keyword id="KW-0812">Transmembrane</keyword>
<keyword id="KW-1133">Transmembrane helix</keyword>
<dbReference type="EC" id="7.1.1.9"/>
<dbReference type="EMBL" id="AF030274">
    <property type="protein sequence ID" value="AAB92236.1"/>
    <property type="molecule type" value="Genomic_DNA"/>
</dbReference>
<dbReference type="SMR" id="O47685"/>
<dbReference type="GO" id="GO:0005743">
    <property type="term" value="C:mitochondrial inner membrane"/>
    <property type="evidence" value="ECO:0007669"/>
    <property type="project" value="UniProtKB-SubCell"/>
</dbReference>
<dbReference type="GO" id="GO:0045277">
    <property type="term" value="C:respiratory chain complex IV"/>
    <property type="evidence" value="ECO:0000250"/>
    <property type="project" value="UniProtKB"/>
</dbReference>
<dbReference type="GO" id="GO:0004129">
    <property type="term" value="F:cytochrome-c oxidase activity"/>
    <property type="evidence" value="ECO:0007669"/>
    <property type="project" value="UniProtKB-EC"/>
</dbReference>
<dbReference type="GO" id="GO:0006123">
    <property type="term" value="P:mitochondrial electron transport, cytochrome c to oxygen"/>
    <property type="evidence" value="ECO:0007669"/>
    <property type="project" value="TreeGrafter"/>
</dbReference>
<dbReference type="GO" id="GO:0008535">
    <property type="term" value="P:respiratory chain complex IV assembly"/>
    <property type="evidence" value="ECO:0000250"/>
    <property type="project" value="UniProtKB"/>
</dbReference>
<dbReference type="CDD" id="cd01665">
    <property type="entry name" value="Cyt_c_Oxidase_III"/>
    <property type="match status" value="1"/>
</dbReference>
<dbReference type="FunFam" id="1.10.287.70:FF:000048">
    <property type="entry name" value="Cytochrome c oxidase subunit 3"/>
    <property type="match status" value="1"/>
</dbReference>
<dbReference type="FunFam" id="1.20.120.80:FF:000002">
    <property type="entry name" value="Cytochrome c oxidase subunit 3"/>
    <property type="match status" value="1"/>
</dbReference>
<dbReference type="Gene3D" id="1.10.287.70">
    <property type="match status" value="1"/>
</dbReference>
<dbReference type="Gene3D" id="1.20.120.80">
    <property type="entry name" value="Cytochrome c oxidase, subunit III, four-helix bundle"/>
    <property type="match status" value="1"/>
</dbReference>
<dbReference type="InterPro" id="IPR024791">
    <property type="entry name" value="Cyt_c/ubiquinol_Oxase_su3"/>
</dbReference>
<dbReference type="InterPro" id="IPR033945">
    <property type="entry name" value="Cyt_c_oxase_su3_dom"/>
</dbReference>
<dbReference type="InterPro" id="IPR000298">
    <property type="entry name" value="Cyt_c_oxidase-like_su3"/>
</dbReference>
<dbReference type="InterPro" id="IPR035973">
    <property type="entry name" value="Cyt_c_oxidase_su3-like_sf"/>
</dbReference>
<dbReference type="InterPro" id="IPR013833">
    <property type="entry name" value="Cyt_c_oxidase_su3_a-hlx"/>
</dbReference>
<dbReference type="PANTHER" id="PTHR11403:SF7">
    <property type="entry name" value="CYTOCHROME C OXIDASE SUBUNIT 3"/>
    <property type="match status" value="1"/>
</dbReference>
<dbReference type="PANTHER" id="PTHR11403">
    <property type="entry name" value="CYTOCHROME C OXIDASE SUBUNIT III"/>
    <property type="match status" value="1"/>
</dbReference>
<dbReference type="Pfam" id="PF00510">
    <property type="entry name" value="COX3"/>
    <property type="match status" value="1"/>
</dbReference>
<dbReference type="SUPFAM" id="SSF81452">
    <property type="entry name" value="Cytochrome c oxidase subunit III-like"/>
    <property type="match status" value="1"/>
</dbReference>
<dbReference type="PROSITE" id="PS50253">
    <property type="entry name" value="COX3"/>
    <property type="match status" value="1"/>
</dbReference>
<comment type="function">
    <text evidence="2">Component of the cytochrome c oxidase, the last enzyme in the mitochondrial electron transport chain which drives oxidative phosphorylation. The respiratory chain contains 3 multisubunit complexes succinate dehydrogenase (complex II, CII), ubiquinol-cytochrome c oxidoreductase (cytochrome b-c1 complex, complex III, CIII) and cytochrome c oxidase (complex IV, CIV), that cooperate to transfer electrons derived from NADH and succinate to molecular oxygen, creating an electrochemical gradient over the inner membrane that drives transmembrane transport and the ATP synthase. Cytochrome c oxidase is the component of the respiratory chain that catalyzes the reduction of oxygen to water. Electrons originating from reduced cytochrome c in the intermembrane space (IMS) are transferred via the dinuclear copper A center (CU(A)) of subunit 2 and heme A of subunit 1 to the active site in subunit 1, a binuclear center (BNC) formed by heme A3 and copper B (CU(B)). The BNC reduces molecular oxygen to 2 water molecules using 4 electrons from cytochrome c in the IMS and 4 protons from the mitochondrial matrix.</text>
</comment>
<comment type="catalytic activity">
    <reaction evidence="2">
        <text>4 Fe(II)-[cytochrome c] + O2 + 8 H(+)(in) = 4 Fe(III)-[cytochrome c] + 2 H2O + 4 H(+)(out)</text>
        <dbReference type="Rhea" id="RHEA:11436"/>
        <dbReference type="Rhea" id="RHEA-COMP:10350"/>
        <dbReference type="Rhea" id="RHEA-COMP:14399"/>
        <dbReference type="ChEBI" id="CHEBI:15377"/>
        <dbReference type="ChEBI" id="CHEBI:15378"/>
        <dbReference type="ChEBI" id="CHEBI:15379"/>
        <dbReference type="ChEBI" id="CHEBI:29033"/>
        <dbReference type="ChEBI" id="CHEBI:29034"/>
        <dbReference type="EC" id="7.1.1.9"/>
    </reaction>
    <physiologicalReaction direction="left-to-right" evidence="2">
        <dbReference type="Rhea" id="RHEA:11437"/>
    </physiologicalReaction>
</comment>
<comment type="subunit">
    <text evidence="1">Component of the cytochrome c oxidase (complex IV, CIV), a multisubunit enzyme composed of 14 subunits. The complex is composed of a catalytic core of 3 subunits MT-CO1, MT-CO2 and MT-CO3, encoded in the mitochondrial DNA, and 11 supernumerary subunits COX4I, COX5A, COX5B, COX6A, COX6B, COX6C, COX7A, COX7B, COX7C, COX8 and NDUFA4, which are encoded in the nuclear genome. The complex exists as a monomer or a dimer and forms supercomplexes (SCs) in the inner mitochondrial membrane with NADH-ubiquinone oxidoreductase (complex I, CI) and ubiquinol-cytochrome c oxidoreductase (cytochrome b-c1 complex, complex III, CIII), resulting in different assemblies (supercomplex SCI(1)III(2)IV(1) and megacomplex MCI(2)III(2)IV(2)).</text>
</comment>
<comment type="subcellular location">
    <subcellularLocation>
        <location evidence="1">Mitochondrion inner membrane</location>
        <topology evidence="1">Multi-pass membrane protein</topology>
    </subcellularLocation>
</comment>
<comment type="similarity">
    <text evidence="3">Belongs to the cytochrome c oxidase subunit 3 family.</text>
</comment>
<gene>
    <name type="primary">MT-CO3</name>
    <name type="synonym">COIII</name>
    <name type="synonym">COXIII</name>
    <name type="synonym">MTCO3</name>
</gene>
<organism>
    <name type="scientific">Tragelaphus imberbis</name>
    <name type="common">Lesser kudu</name>
    <dbReference type="NCBI Taxonomy" id="9947"/>
    <lineage>
        <taxon>Eukaryota</taxon>
        <taxon>Metazoa</taxon>
        <taxon>Chordata</taxon>
        <taxon>Craniata</taxon>
        <taxon>Vertebrata</taxon>
        <taxon>Euteleostomi</taxon>
        <taxon>Mammalia</taxon>
        <taxon>Eutheria</taxon>
        <taxon>Laurasiatheria</taxon>
        <taxon>Artiodactyla</taxon>
        <taxon>Ruminantia</taxon>
        <taxon>Pecora</taxon>
        <taxon>Bovidae</taxon>
        <taxon>Bovinae</taxon>
        <taxon>Tragelaphus</taxon>
    </lineage>
</organism>
<proteinExistence type="inferred from homology"/>
<protein>
    <recommendedName>
        <fullName>Cytochrome c oxidase subunit 3</fullName>
        <ecNumber>7.1.1.9</ecNumber>
    </recommendedName>
    <alternativeName>
        <fullName>Cytochrome c oxidase polypeptide III</fullName>
    </alternativeName>
</protein>